<feature type="signal peptide" evidence="1">
    <location>
        <begin position="1"/>
        <end position="21"/>
    </location>
</feature>
<feature type="chain" id="PRO_0000014299" description="Uncharacterized protein T05G5.1">
    <location>
        <begin position="22"/>
        <end position="411"/>
    </location>
</feature>
<feature type="domain" description="EGF-like" evidence="2">
    <location>
        <begin position="28"/>
        <end position="67"/>
    </location>
</feature>
<feature type="region of interest" description="Disordered" evidence="3">
    <location>
        <begin position="78"/>
        <end position="312"/>
    </location>
</feature>
<feature type="region of interest" description="Disordered" evidence="3">
    <location>
        <begin position="337"/>
        <end position="375"/>
    </location>
</feature>
<feature type="compositionally biased region" description="Polar residues" evidence="3">
    <location>
        <begin position="78"/>
        <end position="97"/>
    </location>
</feature>
<feature type="compositionally biased region" description="Basic and acidic residues" evidence="3">
    <location>
        <begin position="100"/>
        <end position="230"/>
    </location>
</feature>
<feature type="compositionally biased region" description="Acidic residues" evidence="3">
    <location>
        <begin position="237"/>
        <end position="266"/>
    </location>
</feature>
<feature type="compositionally biased region" description="Low complexity" evidence="3">
    <location>
        <begin position="267"/>
        <end position="276"/>
    </location>
</feature>
<feature type="disulfide bond" evidence="2">
    <location>
        <begin position="32"/>
        <end position="42"/>
    </location>
</feature>
<feature type="disulfide bond" evidence="2">
    <location>
        <begin position="36"/>
        <end position="54"/>
    </location>
</feature>
<feature type="disulfide bond" evidence="2">
    <location>
        <begin position="56"/>
        <end position="66"/>
    </location>
</feature>
<gene>
    <name type="ORF">T05G5.1</name>
</gene>
<reference key="1">
    <citation type="journal article" date="1994" name="Nature">
        <title>2.2 Mb of contiguous nucleotide sequence from chromosome III of C. elegans.</title>
        <authorList>
            <person name="Wilson R."/>
            <person name="Ainscough R."/>
            <person name="Anderson K."/>
            <person name="Baynes C."/>
            <person name="Berks M."/>
            <person name="Bonfield J."/>
            <person name="Burton J."/>
            <person name="Connell M."/>
            <person name="Copsey T."/>
            <person name="Cooper J."/>
            <person name="Coulson A."/>
            <person name="Craxton M."/>
            <person name="Dear S."/>
            <person name="Du Z."/>
            <person name="Durbin R."/>
            <person name="Favello A."/>
            <person name="Fraser A."/>
            <person name="Fulton L."/>
            <person name="Gardner A."/>
            <person name="Green P."/>
            <person name="Hawkins T."/>
            <person name="Hillier L."/>
            <person name="Jier M."/>
            <person name="Johnston L."/>
            <person name="Jones M."/>
            <person name="Kershaw J."/>
            <person name="Kirsten J."/>
            <person name="Laisster N."/>
            <person name="Latreille P."/>
            <person name="Lightning J."/>
            <person name="Lloyd C."/>
            <person name="Mortimore B."/>
            <person name="O'Callaghan M."/>
            <person name="Parsons J."/>
            <person name="Percy C."/>
            <person name="Rifken L."/>
            <person name="Roopra A."/>
            <person name="Saunders D."/>
            <person name="Shownkeen R."/>
            <person name="Sims M."/>
            <person name="Smaldon N."/>
            <person name="Smith A."/>
            <person name="Smith M."/>
            <person name="Sonnhammer E."/>
            <person name="Staden R."/>
            <person name="Sulston J."/>
            <person name="Thierry-Mieg J."/>
            <person name="Thomas K."/>
            <person name="Vaudin M."/>
            <person name="Vaughan K."/>
            <person name="Waterston R."/>
            <person name="Watson A."/>
            <person name="Weinstock L."/>
            <person name="Wilkinson-Sproat J."/>
            <person name="Wohldman P."/>
        </authorList>
    </citation>
    <scope>NUCLEOTIDE SEQUENCE [LARGE SCALE GENOMIC DNA]</scope>
    <source>
        <strain>Bristol N2</strain>
    </source>
</reference>
<reference key="2">
    <citation type="journal article" date="1998" name="Science">
        <title>Genome sequence of the nematode C. elegans: a platform for investigating biology.</title>
        <authorList>
            <consortium name="The C. elegans sequencing consortium"/>
        </authorList>
    </citation>
    <scope>NUCLEOTIDE SEQUENCE [LARGE SCALE GENOMIC DNA]</scope>
    <source>
        <strain>Bristol N2</strain>
    </source>
</reference>
<sequence length="411" mass="48700">MHSRILLLLLMFAFNVGLINCGQSLVSPQSNCKIRCENGGMCVFDLERPDFHSCICLLGVYTGDRCQIRIAPEDIETTATSDETSHPMNIQHQQSQADIDDARRRDDERKREYERQVAERTRKEKEDRERASDEERRRQQHEQYWKEETARREQQRAEAERRIQEQRVRDDERRRQHEAERSQIEERRREEESRRLAAQRETDEARVRDEERRRQETEKEVEKELNDKRTQSMNEQFEYEGGDEEYPQVAEKEDEYDEGYETDNTEDVTITTTKTTKLMKPMVEESKGVDGDDGSDMIMEKDEMEDDKEPIRKEDEKLIDSIKHVFNKAVDETVKEHPIEEDEYWDETSKKTDEDSWTAENEGTKKTEEADEYGMEEGTEGWMMVKKENENAAVGTTVSLITVTFLFTLIF</sequence>
<dbReference type="EMBL" id="Z27079">
    <property type="protein sequence ID" value="CAA81593.2"/>
    <property type="molecule type" value="Genomic_DNA"/>
</dbReference>
<dbReference type="PIR" id="F88563">
    <property type="entry name" value="F88563"/>
</dbReference>
<dbReference type="PIR" id="S41001">
    <property type="entry name" value="S41001"/>
</dbReference>
<dbReference type="RefSeq" id="NP_001255018.1">
    <property type="nucleotide sequence ID" value="NM_001268089.4"/>
</dbReference>
<dbReference type="BioGRID" id="532680">
    <property type="interactions" value="1"/>
</dbReference>
<dbReference type="FunCoup" id="P34554">
    <property type="interactions" value="1231"/>
</dbReference>
<dbReference type="STRING" id="6239.T05G5.1a.1"/>
<dbReference type="PaxDb" id="6239-T05G5.1a"/>
<dbReference type="PeptideAtlas" id="P34554"/>
<dbReference type="EnsemblMetazoa" id="T05G5.1a.1">
    <property type="protein sequence ID" value="T05G5.1a.1"/>
    <property type="gene ID" value="WBGene00011498"/>
</dbReference>
<dbReference type="GeneID" id="3565362"/>
<dbReference type="KEGG" id="cel:CELE_T05G5.1"/>
<dbReference type="UCSC" id="T05G5.1">
    <property type="organism name" value="c. elegans"/>
</dbReference>
<dbReference type="AGR" id="WB:WBGene00011498"/>
<dbReference type="CTD" id="3565362"/>
<dbReference type="WormBase" id="T05G5.1a">
    <property type="protein sequence ID" value="CE33540"/>
    <property type="gene ID" value="WBGene00011498"/>
</dbReference>
<dbReference type="eggNOG" id="ENOG502SD41">
    <property type="taxonomic scope" value="Eukaryota"/>
</dbReference>
<dbReference type="HOGENOM" id="CLU_650896_0_0_1"/>
<dbReference type="InParanoid" id="P34554"/>
<dbReference type="OMA" id="HSCICLL"/>
<dbReference type="OrthoDB" id="5870055at2759"/>
<dbReference type="PRO" id="PR:P34554"/>
<dbReference type="Proteomes" id="UP000001940">
    <property type="component" value="Chromosome III"/>
</dbReference>
<dbReference type="Bgee" id="WBGene00011498">
    <property type="expression patterns" value="Expressed in larva and 4 other cell types or tissues"/>
</dbReference>
<dbReference type="ExpressionAtlas" id="P34554">
    <property type="expression patterns" value="baseline and differential"/>
</dbReference>
<dbReference type="Gene3D" id="2.10.25.10">
    <property type="entry name" value="Laminin"/>
    <property type="match status" value="1"/>
</dbReference>
<dbReference type="InterPro" id="IPR000742">
    <property type="entry name" value="EGF-like_dom"/>
</dbReference>
<dbReference type="SUPFAM" id="SSF57196">
    <property type="entry name" value="EGF/Laminin"/>
    <property type="match status" value="1"/>
</dbReference>
<dbReference type="PROSITE" id="PS50026">
    <property type="entry name" value="EGF_3"/>
    <property type="match status" value="1"/>
</dbReference>
<proteinExistence type="inferred from homology"/>
<protein>
    <recommendedName>
        <fullName>Uncharacterized protein T05G5.1</fullName>
    </recommendedName>
</protein>
<accession>P34554</accession>
<evidence type="ECO:0000255" key="1"/>
<evidence type="ECO:0000255" key="2">
    <source>
        <dbReference type="PROSITE-ProRule" id="PRU00076"/>
    </source>
</evidence>
<evidence type="ECO:0000256" key="3">
    <source>
        <dbReference type="SAM" id="MobiDB-lite"/>
    </source>
</evidence>
<name>YNP1_CAEEL</name>
<organism>
    <name type="scientific">Caenorhabditis elegans</name>
    <dbReference type="NCBI Taxonomy" id="6239"/>
    <lineage>
        <taxon>Eukaryota</taxon>
        <taxon>Metazoa</taxon>
        <taxon>Ecdysozoa</taxon>
        <taxon>Nematoda</taxon>
        <taxon>Chromadorea</taxon>
        <taxon>Rhabditida</taxon>
        <taxon>Rhabditina</taxon>
        <taxon>Rhabditomorpha</taxon>
        <taxon>Rhabditoidea</taxon>
        <taxon>Rhabditidae</taxon>
        <taxon>Peloderinae</taxon>
        <taxon>Caenorhabditis</taxon>
    </lineage>
</organism>
<keyword id="KW-1015">Disulfide bond</keyword>
<keyword id="KW-0245">EGF-like domain</keyword>
<keyword id="KW-1185">Reference proteome</keyword>
<keyword id="KW-0732">Signal</keyword>